<proteinExistence type="inferred from homology"/>
<comment type="function">
    <text evidence="1">This protein binds specifically to 23S rRNA; its binding is stimulated by other ribosomal proteins, e.g. L4, L17, and L20. It is important during the early stages of 50S assembly. It makes multiple contacts with different domains of the 23S rRNA in the assembled 50S subunit and ribosome (By similarity).</text>
</comment>
<comment type="function">
    <text evidence="1">The globular domain of the protein is located near the polypeptide exit tunnel on the outside of the subunit, while an extended beta-hairpin is found that lines the wall of the exit tunnel in the center of the 70S ribosome.</text>
</comment>
<comment type="subunit">
    <text evidence="1">Part of the 50S ribosomal subunit.</text>
</comment>
<comment type="similarity">
    <text evidence="1">Belongs to the universal ribosomal protein uL22 family.</text>
</comment>
<feature type="chain" id="PRO_0000125196" description="Large ribosomal subunit protein uL22">
    <location>
        <begin position="1"/>
        <end position="110"/>
    </location>
</feature>
<organism>
    <name type="scientific">Photobacterium profundum (strain SS9)</name>
    <dbReference type="NCBI Taxonomy" id="298386"/>
    <lineage>
        <taxon>Bacteria</taxon>
        <taxon>Pseudomonadati</taxon>
        <taxon>Pseudomonadota</taxon>
        <taxon>Gammaproteobacteria</taxon>
        <taxon>Vibrionales</taxon>
        <taxon>Vibrionaceae</taxon>
        <taxon>Photobacterium</taxon>
    </lineage>
</organism>
<protein>
    <recommendedName>
        <fullName evidence="1">Large ribosomal subunit protein uL22</fullName>
    </recommendedName>
    <alternativeName>
        <fullName evidence="2">50S ribosomal protein L22</fullName>
    </alternativeName>
</protein>
<reference key="1">
    <citation type="journal article" date="2005" name="Science">
        <title>Life at depth: Photobacterium profundum genome sequence and expression analysis.</title>
        <authorList>
            <person name="Vezzi A."/>
            <person name="Campanaro S."/>
            <person name="D'Angelo M."/>
            <person name="Simonato F."/>
            <person name="Vitulo N."/>
            <person name="Lauro F.M."/>
            <person name="Cestaro A."/>
            <person name="Malacrida G."/>
            <person name="Simionati B."/>
            <person name="Cannata N."/>
            <person name="Romualdi C."/>
            <person name="Bartlett D.H."/>
            <person name="Valle G."/>
        </authorList>
    </citation>
    <scope>NUCLEOTIDE SEQUENCE [LARGE SCALE GENOMIC DNA]</scope>
    <source>
        <strain>ATCC BAA-1253 / SS9</strain>
    </source>
</reference>
<keyword id="KW-1185">Reference proteome</keyword>
<keyword id="KW-0687">Ribonucleoprotein</keyword>
<keyword id="KW-0689">Ribosomal protein</keyword>
<keyword id="KW-0694">RNA-binding</keyword>
<keyword id="KW-0699">rRNA-binding</keyword>
<name>RL22_PHOPR</name>
<evidence type="ECO:0000255" key="1">
    <source>
        <dbReference type="HAMAP-Rule" id="MF_01331"/>
    </source>
</evidence>
<evidence type="ECO:0000305" key="2"/>
<accession>Q6LVB1</accession>
<gene>
    <name evidence="1" type="primary">rplV</name>
    <name type="ordered locus">PBPRA0325</name>
</gene>
<sequence>MEAIAKHRFARISPQKARLVADQLRGKPVAQALEILNFSNKKAAELIKKVLESAIANAEHNEGADIDDLNVAKIFVDEGPTMKRIMPRAKGRADRILKRSSHITVVVADR</sequence>
<dbReference type="EMBL" id="CR378663">
    <property type="protein sequence ID" value="CAG18764.1"/>
    <property type="molecule type" value="Genomic_DNA"/>
</dbReference>
<dbReference type="RefSeq" id="WP_011217131.1">
    <property type="nucleotide sequence ID" value="NC_006370.1"/>
</dbReference>
<dbReference type="SMR" id="Q6LVB1"/>
<dbReference type="STRING" id="298386.PBPRA0325"/>
<dbReference type="KEGG" id="ppr:PBPRA0325"/>
<dbReference type="eggNOG" id="COG0091">
    <property type="taxonomic scope" value="Bacteria"/>
</dbReference>
<dbReference type="HOGENOM" id="CLU_083987_3_3_6"/>
<dbReference type="Proteomes" id="UP000000593">
    <property type="component" value="Chromosome 1"/>
</dbReference>
<dbReference type="GO" id="GO:0022625">
    <property type="term" value="C:cytosolic large ribosomal subunit"/>
    <property type="evidence" value="ECO:0007669"/>
    <property type="project" value="TreeGrafter"/>
</dbReference>
<dbReference type="GO" id="GO:0019843">
    <property type="term" value="F:rRNA binding"/>
    <property type="evidence" value="ECO:0007669"/>
    <property type="project" value="UniProtKB-UniRule"/>
</dbReference>
<dbReference type="GO" id="GO:0003735">
    <property type="term" value="F:structural constituent of ribosome"/>
    <property type="evidence" value="ECO:0007669"/>
    <property type="project" value="InterPro"/>
</dbReference>
<dbReference type="GO" id="GO:0006412">
    <property type="term" value="P:translation"/>
    <property type="evidence" value="ECO:0007669"/>
    <property type="project" value="UniProtKB-UniRule"/>
</dbReference>
<dbReference type="CDD" id="cd00336">
    <property type="entry name" value="Ribosomal_L22"/>
    <property type="match status" value="1"/>
</dbReference>
<dbReference type="FunFam" id="3.90.470.10:FF:000001">
    <property type="entry name" value="50S ribosomal protein L22"/>
    <property type="match status" value="1"/>
</dbReference>
<dbReference type="Gene3D" id="3.90.470.10">
    <property type="entry name" value="Ribosomal protein L22/L17"/>
    <property type="match status" value="1"/>
</dbReference>
<dbReference type="HAMAP" id="MF_01331_B">
    <property type="entry name" value="Ribosomal_uL22_B"/>
    <property type="match status" value="1"/>
</dbReference>
<dbReference type="InterPro" id="IPR001063">
    <property type="entry name" value="Ribosomal_uL22"/>
</dbReference>
<dbReference type="InterPro" id="IPR005727">
    <property type="entry name" value="Ribosomal_uL22_bac/chlpt-type"/>
</dbReference>
<dbReference type="InterPro" id="IPR047867">
    <property type="entry name" value="Ribosomal_uL22_bac/org-type"/>
</dbReference>
<dbReference type="InterPro" id="IPR018260">
    <property type="entry name" value="Ribosomal_uL22_CS"/>
</dbReference>
<dbReference type="InterPro" id="IPR036394">
    <property type="entry name" value="Ribosomal_uL22_sf"/>
</dbReference>
<dbReference type="NCBIfam" id="TIGR01044">
    <property type="entry name" value="rplV_bact"/>
    <property type="match status" value="1"/>
</dbReference>
<dbReference type="PANTHER" id="PTHR13501">
    <property type="entry name" value="CHLOROPLAST 50S RIBOSOMAL PROTEIN L22-RELATED"/>
    <property type="match status" value="1"/>
</dbReference>
<dbReference type="PANTHER" id="PTHR13501:SF8">
    <property type="entry name" value="LARGE RIBOSOMAL SUBUNIT PROTEIN UL22M"/>
    <property type="match status" value="1"/>
</dbReference>
<dbReference type="Pfam" id="PF00237">
    <property type="entry name" value="Ribosomal_L22"/>
    <property type="match status" value="1"/>
</dbReference>
<dbReference type="SUPFAM" id="SSF54843">
    <property type="entry name" value="Ribosomal protein L22"/>
    <property type="match status" value="1"/>
</dbReference>
<dbReference type="PROSITE" id="PS00464">
    <property type="entry name" value="RIBOSOMAL_L22"/>
    <property type="match status" value="1"/>
</dbReference>